<feature type="chain" id="PRO_0000360878" description="Tryptophan 2,3-dioxygenase">
    <location>
        <begin position="1"/>
        <end position="380"/>
    </location>
</feature>
<feature type="binding site" evidence="1">
    <location>
        <begin position="57"/>
        <end position="61"/>
    </location>
    <ligand>
        <name>substrate</name>
    </ligand>
</feature>
<feature type="binding site" evidence="1">
    <location>
        <position position="128"/>
    </location>
    <ligand>
        <name>substrate</name>
    </ligand>
</feature>
<feature type="binding site" description="axial binding residue" evidence="1">
    <location>
        <position position="313"/>
    </location>
    <ligand>
        <name>heme</name>
        <dbReference type="ChEBI" id="CHEBI:30413"/>
    </ligand>
    <ligandPart>
        <name>Fe</name>
        <dbReference type="ChEBI" id="CHEBI:18248"/>
    </ligandPart>
</feature>
<feature type="binding site" evidence="1">
    <location>
        <position position="328"/>
    </location>
    <ligand>
        <name>substrate</name>
    </ligand>
</feature>
<accession>B4H4U3</accession>
<evidence type="ECO:0000255" key="1">
    <source>
        <dbReference type="HAMAP-Rule" id="MF_03020"/>
    </source>
</evidence>
<organism>
    <name type="scientific">Drosophila persimilis</name>
    <name type="common">Fruit fly</name>
    <dbReference type="NCBI Taxonomy" id="7234"/>
    <lineage>
        <taxon>Eukaryota</taxon>
        <taxon>Metazoa</taxon>
        <taxon>Ecdysozoa</taxon>
        <taxon>Arthropoda</taxon>
        <taxon>Hexapoda</taxon>
        <taxon>Insecta</taxon>
        <taxon>Pterygota</taxon>
        <taxon>Neoptera</taxon>
        <taxon>Endopterygota</taxon>
        <taxon>Diptera</taxon>
        <taxon>Brachycera</taxon>
        <taxon>Muscomorpha</taxon>
        <taxon>Ephydroidea</taxon>
        <taxon>Drosophilidae</taxon>
        <taxon>Drosophila</taxon>
        <taxon>Sophophora</taxon>
    </lineage>
</organism>
<proteinExistence type="inferred from homology"/>
<keyword id="KW-0223">Dioxygenase</keyword>
<keyword id="KW-0349">Heme</keyword>
<keyword id="KW-0408">Iron</keyword>
<keyword id="KW-0479">Metal-binding</keyword>
<keyword id="KW-0560">Oxidoreductase</keyword>
<keyword id="KW-1185">Reference proteome</keyword>
<keyword id="KW-0823">Tryptophan catabolism</keyword>
<comment type="function">
    <text evidence="1">Heme-dependent dioxygenase that catalyzes the oxidative cleavage of the L-tryptophan (L-Trp) pyrrole ring and converts L-tryptophan to N-formyl-L-kynurenine. Catalyzes the oxidative cleavage of the indole moiety.</text>
</comment>
<comment type="catalytic activity">
    <reaction evidence="1">
        <text>L-tryptophan + O2 = N-formyl-L-kynurenine</text>
        <dbReference type="Rhea" id="RHEA:24536"/>
        <dbReference type="ChEBI" id="CHEBI:15379"/>
        <dbReference type="ChEBI" id="CHEBI:57912"/>
        <dbReference type="ChEBI" id="CHEBI:58629"/>
        <dbReference type="EC" id="1.13.11.11"/>
    </reaction>
</comment>
<comment type="cofactor">
    <cofactor evidence="1">
        <name>heme</name>
        <dbReference type="ChEBI" id="CHEBI:30413"/>
    </cofactor>
    <text evidence="1">Binds 1 heme group per subunit.</text>
</comment>
<comment type="pathway">
    <text evidence="1">Amino-acid degradation; L-tryptophan degradation via kynurenine pathway; L-kynurenine from L-tryptophan: step 1/2.</text>
</comment>
<comment type="pathway">
    <text evidence="1">Pigment biosynthesis; ommochrome biosynthesis.</text>
</comment>
<comment type="subunit">
    <text evidence="1">Homotetramer. Dimer of dimers.</text>
</comment>
<comment type="similarity">
    <text evidence="1">Belongs to the tryptophan 2,3-dioxygenase family.</text>
</comment>
<name>T23O_DROPE</name>
<sequence length="380" mass="44298">MSCPYAGNGNDHDDAAVPLSTEVGKIYGEYLMLDKLLDAQCMLSTEDKRPVHDEHLFIITHQAYELWFKQIIFEFDSIRDMLDAEVIDETKTLEIVKRLNRVVLILKLLVDQVPILETMTPLDFMDFRKYLAPASGFQSLQFRLIENKLGVLTEQRVRYNQKYSDVFGGDEQALSAIRSSEYEPSLLELVQRWLERTPGLEESGFNFWKKFQQSVDQFLAAQVEIAMEEPVEQAKNYRLMDIEKRREVYHSIFDPAVHEALVKRGDRRFSHRALQGAIMITFYRDEPRFSQPHQLLTLLMDIDSLITKWRYNHVIMVQRMIGSQQLGTGGSSGYQYLRSTLSDRYKVFLDLFNLSTFLIPREAIPPLDETIRKKLVHKSV</sequence>
<dbReference type="EC" id="1.13.11.11" evidence="1"/>
<dbReference type="EMBL" id="CH479209">
    <property type="protein sequence ID" value="EDW32705.1"/>
    <property type="molecule type" value="Genomic_DNA"/>
</dbReference>
<dbReference type="SMR" id="B4H4U3"/>
<dbReference type="STRING" id="7234.B4H4U3"/>
<dbReference type="EnsemblMetazoa" id="FBtr0183858">
    <property type="protein sequence ID" value="FBpp0182350"/>
    <property type="gene ID" value="FBgn0155845"/>
</dbReference>
<dbReference type="EnsemblMetazoa" id="XM_002025773.2">
    <property type="protein sequence ID" value="XP_002025809.1"/>
    <property type="gene ID" value="LOC6600786"/>
</dbReference>
<dbReference type="GeneID" id="6600786"/>
<dbReference type="KEGG" id="dpe:6600786"/>
<dbReference type="CTD" id="136040130"/>
<dbReference type="eggNOG" id="KOG3906">
    <property type="taxonomic scope" value="Eukaryota"/>
</dbReference>
<dbReference type="HOGENOM" id="CLU_045599_1_1_1"/>
<dbReference type="OMA" id="WRWRNDH"/>
<dbReference type="OrthoDB" id="447477at2759"/>
<dbReference type="PhylomeDB" id="B4H4U3"/>
<dbReference type="UniPathway" id="UPA00271"/>
<dbReference type="UniPathway" id="UPA00333">
    <property type="reaction ID" value="UER00453"/>
</dbReference>
<dbReference type="Proteomes" id="UP000008744">
    <property type="component" value="Unassembled WGS sequence"/>
</dbReference>
<dbReference type="GO" id="GO:0020037">
    <property type="term" value="F:heme binding"/>
    <property type="evidence" value="ECO:0000250"/>
    <property type="project" value="UniProtKB"/>
</dbReference>
<dbReference type="GO" id="GO:0046872">
    <property type="term" value="F:metal ion binding"/>
    <property type="evidence" value="ECO:0007669"/>
    <property type="project" value="UniProtKB-KW"/>
</dbReference>
<dbReference type="GO" id="GO:0004833">
    <property type="term" value="F:tryptophan 2,3-dioxygenase activity"/>
    <property type="evidence" value="ECO:0000250"/>
    <property type="project" value="UniProtKB"/>
</dbReference>
<dbReference type="GO" id="GO:0019442">
    <property type="term" value="P:L-tryptophan catabolic process to acetyl-CoA"/>
    <property type="evidence" value="ECO:0007669"/>
    <property type="project" value="TreeGrafter"/>
</dbReference>
<dbReference type="GO" id="GO:0019441">
    <property type="term" value="P:L-tryptophan catabolic process to kynurenine"/>
    <property type="evidence" value="ECO:0000250"/>
    <property type="project" value="UniProtKB"/>
</dbReference>
<dbReference type="GO" id="GO:0006727">
    <property type="term" value="P:ommochrome biosynthetic process"/>
    <property type="evidence" value="ECO:0007669"/>
    <property type="project" value="UniProtKB-UniRule"/>
</dbReference>
<dbReference type="GO" id="GO:0051289">
    <property type="term" value="P:protein homotetramerization"/>
    <property type="evidence" value="ECO:0007669"/>
    <property type="project" value="EnsemblMetazoa"/>
</dbReference>
<dbReference type="FunFam" id="1.10.287.3810:FF:000001">
    <property type="entry name" value="Tryptophan 2,3-dioxygenase"/>
    <property type="match status" value="1"/>
</dbReference>
<dbReference type="Gene3D" id="1.10.287.3810">
    <property type="match status" value="1"/>
</dbReference>
<dbReference type="Gene3D" id="1.20.58.480">
    <property type="match status" value="1"/>
</dbReference>
<dbReference type="HAMAP" id="MF_01972">
    <property type="entry name" value="T23O"/>
    <property type="match status" value="1"/>
</dbReference>
<dbReference type="InterPro" id="IPR037217">
    <property type="entry name" value="Trp/Indoleamine_2_3_dOase-like"/>
</dbReference>
<dbReference type="InterPro" id="IPR004981">
    <property type="entry name" value="Trp_2_3_dOase"/>
</dbReference>
<dbReference type="PANTHER" id="PTHR10138">
    <property type="entry name" value="TRYPTOPHAN 2,3-DIOXYGENASE"/>
    <property type="match status" value="1"/>
</dbReference>
<dbReference type="PANTHER" id="PTHR10138:SF0">
    <property type="entry name" value="TRYPTOPHAN 2,3-DIOXYGENASE"/>
    <property type="match status" value="1"/>
</dbReference>
<dbReference type="Pfam" id="PF03301">
    <property type="entry name" value="Trp_dioxygenase"/>
    <property type="match status" value="1"/>
</dbReference>
<dbReference type="SUPFAM" id="SSF140959">
    <property type="entry name" value="Indolic compounds 2,3-dioxygenase-like"/>
    <property type="match status" value="1"/>
</dbReference>
<gene>
    <name evidence="1" type="primary">v</name>
    <name type="ORF">GL18243</name>
</gene>
<protein>
    <recommendedName>
        <fullName evidence="1">Tryptophan 2,3-dioxygenase</fullName>
        <shortName evidence="1">TDO</shortName>
        <ecNumber evidence="1">1.13.11.11</ecNumber>
    </recommendedName>
    <alternativeName>
        <fullName evidence="1">Protein vermilion</fullName>
    </alternativeName>
    <alternativeName>
        <fullName evidence="1">Tryptamin 2,3-dioxygenase</fullName>
    </alternativeName>
    <alternativeName>
        <fullName evidence="1">Tryptophan oxygenase</fullName>
        <shortName evidence="1">TO</shortName>
        <shortName evidence="1">TRPO</shortName>
    </alternativeName>
    <alternativeName>
        <fullName evidence="1">Tryptophan pyrrolase</fullName>
    </alternativeName>
    <alternativeName>
        <fullName evidence="1">Tryptophanase</fullName>
    </alternativeName>
</protein>
<reference key="1">
    <citation type="journal article" date="2007" name="Nature">
        <title>Evolution of genes and genomes on the Drosophila phylogeny.</title>
        <authorList>
            <consortium name="Drosophila 12 genomes consortium"/>
        </authorList>
    </citation>
    <scope>NUCLEOTIDE SEQUENCE [LARGE SCALE GENOMIC DNA]</scope>
    <source>
        <strain>MSH-3 / Tucson 14011-0111.49</strain>
    </source>
</reference>